<accession>B5F144</accession>
<keyword id="KW-0143">Chaperone</keyword>
<keyword id="KW-0574">Periplasm</keyword>
<keyword id="KW-0653">Protein transport</keyword>
<keyword id="KW-0732">Signal</keyword>
<keyword id="KW-0813">Transport</keyword>
<feature type="signal peptide" evidence="1">
    <location>
        <begin position="1"/>
        <end position="21"/>
    </location>
</feature>
<feature type="chain" id="PRO_1000100723" description="Outer-membrane lipoprotein carrier protein">
    <location>
        <begin position="22"/>
        <end position="203"/>
    </location>
</feature>
<feature type="region of interest" description="Disordered" evidence="2">
    <location>
        <begin position="178"/>
        <end position="203"/>
    </location>
</feature>
<dbReference type="EMBL" id="CP001138">
    <property type="protein sequence ID" value="ACH51177.1"/>
    <property type="molecule type" value="Genomic_DNA"/>
</dbReference>
<dbReference type="RefSeq" id="WP_001519746.1">
    <property type="nucleotide sequence ID" value="NC_011149.1"/>
</dbReference>
<dbReference type="SMR" id="B5F144"/>
<dbReference type="KEGG" id="sea:SeAg_B0966"/>
<dbReference type="HOGENOM" id="CLU_087560_1_1_6"/>
<dbReference type="Proteomes" id="UP000008819">
    <property type="component" value="Chromosome"/>
</dbReference>
<dbReference type="GO" id="GO:0030288">
    <property type="term" value="C:outer membrane-bounded periplasmic space"/>
    <property type="evidence" value="ECO:0007669"/>
    <property type="project" value="TreeGrafter"/>
</dbReference>
<dbReference type="GO" id="GO:0044874">
    <property type="term" value="P:lipoprotein localization to outer membrane"/>
    <property type="evidence" value="ECO:0007669"/>
    <property type="project" value="UniProtKB-UniRule"/>
</dbReference>
<dbReference type="GO" id="GO:0042953">
    <property type="term" value="P:lipoprotein transport"/>
    <property type="evidence" value="ECO:0007669"/>
    <property type="project" value="InterPro"/>
</dbReference>
<dbReference type="CDD" id="cd16325">
    <property type="entry name" value="LolA"/>
    <property type="match status" value="1"/>
</dbReference>
<dbReference type="FunFam" id="2.50.20.10:FF:000001">
    <property type="entry name" value="Outer-membrane lipoprotein carrier protein"/>
    <property type="match status" value="1"/>
</dbReference>
<dbReference type="Gene3D" id="2.50.20.10">
    <property type="entry name" value="Lipoprotein localisation LolA/LolB/LppX"/>
    <property type="match status" value="1"/>
</dbReference>
<dbReference type="HAMAP" id="MF_00240">
    <property type="entry name" value="LolA"/>
    <property type="match status" value="1"/>
</dbReference>
<dbReference type="InterPro" id="IPR029046">
    <property type="entry name" value="LolA/LolB/LppX"/>
</dbReference>
<dbReference type="InterPro" id="IPR004564">
    <property type="entry name" value="OM_lipoprot_carrier_LolA-like"/>
</dbReference>
<dbReference type="InterPro" id="IPR018323">
    <property type="entry name" value="OM_lipoprot_carrier_LolA_Pbac"/>
</dbReference>
<dbReference type="NCBIfam" id="TIGR00547">
    <property type="entry name" value="lolA"/>
    <property type="match status" value="1"/>
</dbReference>
<dbReference type="PANTHER" id="PTHR35869">
    <property type="entry name" value="OUTER-MEMBRANE LIPOPROTEIN CARRIER PROTEIN"/>
    <property type="match status" value="1"/>
</dbReference>
<dbReference type="PANTHER" id="PTHR35869:SF1">
    <property type="entry name" value="OUTER-MEMBRANE LIPOPROTEIN CARRIER PROTEIN"/>
    <property type="match status" value="1"/>
</dbReference>
<dbReference type="Pfam" id="PF03548">
    <property type="entry name" value="LolA"/>
    <property type="match status" value="1"/>
</dbReference>
<dbReference type="SUPFAM" id="SSF89392">
    <property type="entry name" value="Prokaryotic lipoproteins and lipoprotein localization factors"/>
    <property type="match status" value="1"/>
</dbReference>
<organism>
    <name type="scientific">Salmonella agona (strain SL483)</name>
    <dbReference type="NCBI Taxonomy" id="454166"/>
    <lineage>
        <taxon>Bacteria</taxon>
        <taxon>Pseudomonadati</taxon>
        <taxon>Pseudomonadota</taxon>
        <taxon>Gammaproteobacteria</taxon>
        <taxon>Enterobacterales</taxon>
        <taxon>Enterobacteriaceae</taxon>
        <taxon>Salmonella</taxon>
    </lineage>
</organism>
<gene>
    <name evidence="1" type="primary">lolA</name>
    <name type="ordered locus">SeAg_B0966</name>
</gene>
<name>LOLA_SALA4</name>
<protein>
    <recommendedName>
        <fullName evidence="1">Outer-membrane lipoprotein carrier protein</fullName>
    </recommendedName>
</protein>
<evidence type="ECO:0000255" key="1">
    <source>
        <dbReference type="HAMAP-Rule" id="MF_00240"/>
    </source>
</evidence>
<evidence type="ECO:0000256" key="2">
    <source>
        <dbReference type="SAM" id="MobiDB-lite"/>
    </source>
</evidence>
<reference key="1">
    <citation type="journal article" date="2011" name="J. Bacteriol.">
        <title>Comparative genomics of 28 Salmonella enterica isolates: evidence for CRISPR-mediated adaptive sublineage evolution.</title>
        <authorList>
            <person name="Fricke W.F."/>
            <person name="Mammel M.K."/>
            <person name="McDermott P.F."/>
            <person name="Tartera C."/>
            <person name="White D.G."/>
            <person name="Leclerc J.E."/>
            <person name="Ravel J."/>
            <person name="Cebula T.A."/>
        </authorList>
    </citation>
    <scope>NUCLEOTIDE SEQUENCE [LARGE SCALE GENOMIC DNA]</scope>
    <source>
        <strain>SL483</strain>
    </source>
</reference>
<sequence>MKKMAIACALLSSVVASSVWADAASSLKSRLDKVSSFHATFTQKVTDGSGAAVQEGQGDLWVKRPNLFNWHMTQPDESILVSDGKTLWFYNPFVEQATATWLKDATGNTPFMLIARNQASDWQQYNIKQDGDNFVLTPKASNGNLKQFTINVGRDGTIHQFSAVEQDDQRSAYQLKSQQNGAVDPSKFTFTPPQGVTIDDQRK</sequence>
<comment type="function">
    <text evidence="1">Participates in the translocation of lipoproteins from the inner membrane to the outer membrane. Only forms a complex with a lipoprotein if the residue after the N-terminal Cys is not an aspartate (The Asp acts as a targeting signal to indicate that the lipoprotein should stay in the inner membrane).</text>
</comment>
<comment type="subunit">
    <text evidence="1">Monomer.</text>
</comment>
<comment type="subcellular location">
    <subcellularLocation>
        <location evidence="1">Periplasm</location>
    </subcellularLocation>
</comment>
<comment type="similarity">
    <text evidence="1">Belongs to the LolA family.</text>
</comment>
<proteinExistence type="inferred from homology"/>